<gene>
    <name evidence="2" type="primary">HA</name>
</gene>
<keyword id="KW-1167">Clathrin- and caveolin-independent endocytosis of virus by host</keyword>
<keyword id="KW-1165">Clathrin-mediated endocytosis of virus by host</keyword>
<keyword id="KW-1015">Disulfide bond</keyword>
<keyword id="KW-1170">Fusion of virus membrane with host endosomal membrane</keyword>
<keyword id="KW-1168">Fusion of virus membrane with host membrane</keyword>
<keyword id="KW-0325">Glycoprotein</keyword>
<keyword id="KW-0348">Hemagglutinin</keyword>
<keyword id="KW-1032">Host cell membrane</keyword>
<keyword id="KW-1043">Host membrane</keyword>
<keyword id="KW-0945">Host-virus interaction</keyword>
<keyword id="KW-0449">Lipoprotein</keyword>
<keyword id="KW-0472">Membrane</keyword>
<keyword id="KW-0564">Palmitate</keyword>
<keyword id="KW-0732">Signal</keyword>
<keyword id="KW-0812">Transmembrane</keyword>
<keyword id="KW-1133">Transmembrane helix</keyword>
<keyword id="KW-1161">Viral attachment to host cell</keyword>
<keyword id="KW-0261">Viral envelope protein</keyword>
<keyword id="KW-1162">Viral penetration into host cytoplasm</keyword>
<keyword id="KW-0946">Virion</keyword>
<keyword id="KW-1164">Virus endocytosis by host</keyword>
<keyword id="KW-1160">Virus entry into host cell</keyword>
<organism>
    <name type="scientific">Influenza A virus (strain A/Turkey/Minnesota/1661/1981 H1N1)</name>
    <dbReference type="NCBI Taxonomy" id="380349"/>
    <lineage>
        <taxon>Viruses</taxon>
        <taxon>Riboviria</taxon>
        <taxon>Orthornavirae</taxon>
        <taxon>Negarnaviricota</taxon>
        <taxon>Polyploviricotina</taxon>
        <taxon>Insthoviricetes</taxon>
        <taxon>Articulavirales</taxon>
        <taxon>Orthomyxoviridae</taxon>
        <taxon>Alphainfluenzavirus</taxon>
        <taxon>Alphainfluenzavirus influenzae</taxon>
        <taxon>Influenza A virus</taxon>
    </lineage>
</organism>
<dbReference type="EMBL" id="AF091310">
    <property type="protein sequence ID" value="AAD25305.1"/>
    <property type="molecule type" value="mRNA"/>
</dbReference>
<dbReference type="SMR" id="Q9WCE1"/>
<dbReference type="GlyCosmos" id="Q9WCE1">
    <property type="glycosylation" value="6 sites, No reported glycans"/>
</dbReference>
<dbReference type="GO" id="GO:0020002">
    <property type="term" value="C:host cell plasma membrane"/>
    <property type="evidence" value="ECO:0007669"/>
    <property type="project" value="UniProtKB-SubCell"/>
</dbReference>
<dbReference type="GO" id="GO:0016020">
    <property type="term" value="C:membrane"/>
    <property type="evidence" value="ECO:0007669"/>
    <property type="project" value="UniProtKB-UniRule"/>
</dbReference>
<dbReference type="GO" id="GO:0019031">
    <property type="term" value="C:viral envelope"/>
    <property type="evidence" value="ECO:0007669"/>
    <property type="project" value="UniProtKB-UniRule"/>
</dbReference>
<dbReference type="GO" id="GO:0055036">
    <property type="term" value="C:virion membrane"/>
    <property type="evidence" value="ECO:0007669"/>
    <property type="project" value="UniProtKB-SubCell"/>
</dbReference>
<dbReference type="GO" id="GO:0046789">
    <property type="term" value="F:host cell surface receptor binding"/>
    <property type="evidence" value="ECO:0007669"/>
    <property type="project" value="UniProtKB-UniRule"/>
</dbReference>
<dbReference type="GO" id="GO:0075512">
    <property type="term" value="P:clathrin-dependent endocytosis of virus by host cell"/>
    <property type="evidence" value="ECO:0007669"/>
    <property type="project" value="UniProtKB-UniRule"/>
</dbReference>
<dbReference type="GO" id="GO:0039654">
    <property type="term" value="P:fusion of virus membrane with host endosome membrane"/>
    <property type="evidence" value="ECO:0007669"/>
    <property type="project" value="UniProtKB-UniRule"/>
</dbReference>
<dbReference type="GO" id="GO:0019064">
    <property type="term" value="P:fusion of virus membrane with host plasma membrane"/>
    <property type="evidence" value="ECO:0007669"/>
    <property type="project" value="InterPro"/>
</dbReference>
<dbReference type="GO" id="GO:0046761">
    <property type="term" value="P:viral budding from plasma membrane"/>
    <property type="evidence" value="ECO:0007669"/>
    <property type="project" value="UniProtKB-UniRule"/>
</dbReference>
<dbReference type="GO" id="GO:0019062">
    <property type="term" value="P:virion attachment to host cell"/>
    <property type="evidence" value="ECO:0007669"/>
    <property type="project" value="UniProtKB-KW"/>
</dbReference>
<dbReference type="FunFam" id="3.90.20.10:FF:000002">
    <property type="entry name" value="Hemagglutinin"/>
    <property type="match status" value="1"/>
</dbReference>
<dbReference type="Gene3D" id="3.90.20.10">
    <property type="match status" value="1"/>
</dbReference>
<dbReference type="Gene3D" id="3.90.209.20">
    <property type="match status" value="1"/>
</dbReference>
<dbReference type="Gene3D" id="2.10.77.10">
    <property type="entry name" value="Hemagglutinin Chain A, Domain 2"/>
    <property type="match status" value="1"/>
</dbReference>
<dbReference type="HAMAP" id="MF_04072">
    <property type="entry name" value="INFV_HEMA"/>
    <property type="match status" value="1"/>
</dbReference>
<dbReference type="InterPro" id="IPR008980">
    <property type="entry name" value="Capsid_hemagglutn"/>
</dbReference>
<dbReference type="InterPro" id="IPR013828">
    <property type="entry name" value="Hemagglutn_HA1_a/b_dom_sf"/>
</dbReference>
<dbReference type="InterPro" id="IPR000149">
    <property type="entry name" value="Hemagglutn_influenz_A"/>
</dbReference>
<dbReference type="InterPro" id="IPR001364">
    <property type="entry name" value="Hemagglutn_influenz_A/B"/>
</dbReference>
<dbReference type="Pfam" id="PF00509">
    <property type="entry name" value="Hemagglutinin"/>
    <property type="match status" value="1"/>
</dbReference>
<dbReference type="PRINTS" id="PR00330">
    <property type="entry name" value="HEMAGGLUTN1"/>
</dbReference>
<dbReference type="PRINTS" id="PR00329">
    <property type="entry name" value="HEMAGGLUTN12"/>
</dbReference>
<dbReference type="SUPFAM" id="SSF58064">
    <property type="entry name" value="Influenza hemagglutinin (stalk)"/>
    <property type="match status" value="1"/>
</dbReference>
<dbReference type="SUPFAM" id="SSF49818">
    <property type="entry name" value="Viral protein domain"/>
    <property type="match status" value="1"/>
</dbReference>
<accession>Q9WCE1</accession>
<name>HEMA_I81A3</name>
<comment type="function">
    <text evidence="2">Binds to sialic acid-containing receptors on the cell surface, bringing about the attachment of the virus particle to the cell. This attachment induces virion internalization either through clathrin-dependent endocytosis or through clathrin- and caveolin-independent pathway. Plays a major role in the determination of host range restriction and virulence. Class I viral fusion protein. Responsible for penetration of the virus into the cell cytoplasm by mediating the fusion of the membrane of the endocytosed virus particle with the endosomal membrane. Low pH in endosomes induces an irreversible conformational change in HA2, releasing the fusion hydrophobic peptide. Several trimers are required to form a competent fusion pore.</text>
</comment>
<comment type="subunit">
    <text evidence="1">Homotrimer of disulfide-linked HA1-HA2. Interacts with human CACNA1C.</text>
</comment>
<comment type="subcellular location">
    <subcellularLocation>
        <location evidence="2">Virion membrane</location>
        <topology evidence="2">Single-pass type I membrane protein</topology>
    </subcellularLocation>
    <subcellularLocation>
        <location evidence="2">Host apical cell membrane</location>
        <topology evidence="2">Single-pass type I membrane protein</topology>
    </subcellularLocation>
    <text evidence="2">Targeted to the apical plasma membrane in epithelial polarized cells through a signal present in the transmembrane domain. Associated with glycosphingolipid- and cholesterol-enriched detergent-resistant lipid rafts.</text>
</comment>
<comment type="PTM">
    <text evidence="2">Palmitoylated.</text>
</comment>
<comment type="PTM">
    <text evidence="2">In natural infection, inactive HA is matured into HA1 and HA2 outside the cell by one or more trypsin-like, arginine-specific endoprotease secreted by the bronchial epithelial cells. One identified protease that may be involved in this process is secreted in lungs by club cells.</text>
</comment>
<comment type="miscellaneous">
    <text>Major glycoprotein, comprises over 80% of the envelope proteins present in virus particle.</text>
</comment>
<comment type="miscellaneous">
    <text>The extent of infection into host organism is determined by HA. Influenza viruses bud from the apical surface of polarized epithelial cells (e.g. bronchial epithelial cells) into lumen of lungs and are therefore usually pneumotropic. The reason is that HA is cleaved by tryptase clara which is restricted to lungs. However, HAs of H5 and H7 pantropic avian viruses subtypes can be cleaved by furin and subtilisin-type enzymes, allowing the virus to grow in other organs than lungs.</text>
</comment>
<comment type="miscellaneous">
    <text evidence="3">The influenza A genome consist of 8 RNA segments. Genetic variation of hemagglutinin and/or neuraminidase genes results in the emergence of new influenza strains. The mechanism of variation can be the result of point mutations or the result of genetic reassortment between segments of two different strains.</text>
</comment>
<comment type="similarity">
    <text evidence="2">Belongs to the influenza viruses hemagglutinin family.</text>
</comment>
<sequence>MEAKLFVLFCTFTVLKADTICVGYHANNSTDTVDTVLEKNVTVTHSVNLLEDSHNGKLCSLNGIAPLQLGKCNVAGWLLGNPECDLLLTANSWSYIIETSNSENGTCYPGEFIDYEELREQLSSVSSFEKFEIFPKASSWPNHETTKGVTAACSYSGASSFYRNLLWITKKGTSYPKLSKSYTNNKGKEVLVLWGVHHPPTTSEQQSLYQNADAYVSVGSSKYNRRFTPEIAARPKVRGQAGRMNYYWTLLDQGDTITFEATGNLIAPWYAFALNKGSDSGIITSDAPVHNCDTRCQTPHGALNSSLPFQNVHPITIGECPKYVKSTKLRMATGLRNVPSIQSRGLFGAIAGFIEGGWTGMIDGWYGYHHQNEQGSGYAADQKSTQNAIDGITNKVNSVIEKMNTQFTAVGKEFNNLERRIEKLNKKVDDGFLDVWTYNAELLVLLENERTLDFHDSNVRNLYEKVKSQLRNNAKELGNGCFEFYHKCDDECMESVKNGTYDYPKYSEESKLNREEIDGVKLESMGVYQILAIYSTVASSLVLLVSLGAISFWMCSNGSLQCRICI</sequence>
<protein>
    <recommendedName>
        <fullName evidence="2">Hemagglutinin</fullName>
    </recommendedName>
    <component>
        <recommendedName>
            <fullName evidence="2">Hemagglutinin HA1 chain</fullName>
        </recommendedName>
    </component>
    <component>
        <recommendedName>
            <fullName evidence="2">Hemagglutinin HA2 chain</fullName>
        </recommendedName>
    </component>
</protein>
<feature type="signal peptide" evidence="2">
    <location>
        <begin position="1"/>
        <end position="17"/>
    </location>
</feature>
<feature type="chain" id="PRO_0000440496" description="Hemagglutinin" evidence="2">
    <location>
        <begin position="18"/>
        <end position="566"/>
    </location>
</feature>
<feature type="chain" id="PRO_5000055159" description="Hemagglutinin HA1 chain" evidence="2">
    <location>
        <begin position="18"/>
        <end position="343"/>
    </location>
</feature>
<feature type="chain" id="PRO_5000055160" description="Hemagglutinin HA2 chain" evidence="2">
    <location>
        <begin position="345"/>
        <end position="566"/>
    </location>
</feature>
<feature type="topological domain" description="Extracellular" evidence="2">
    <location>
        <begin position="18"/>
        <end position="529"/>
    </location>
</feature>
<feature type="transmembrane region" description="Helical" evidence="2">
    <location>
        <begin position="530"/>
        <end position="550"/>
    </location>
</feature>
<feature type="topological domain" description="Cytoplasmic" evidence="2">
    <location>
        <begin position="551"/>
        <end position="566"/>
    </location>
</feature>
<feature type="site" description="Cleavage; by host" evidence="2">
    <location>
        <begin position="344"/>
        <end position="345"/>
    </location>
</feature>
<feature type="lipid moiety-binding region" description="S-palmitoyl cysteine; by host" evidence="2">
    <location>
        <position position="555"/>
    </location>
</feature>
<feature type="lipid moiety-binding region" description="S-palmitoyl cysteine; by host" evidence="2">
    <location>
        <position position="562"/>
    </location>
</feature>
<feature type="lipid moiety-binding region" description="S-palmitoyl cysteine; by host" evidence="2">
    <location>
        <position position="565"/>
    </location>
</feature>
<feature type="glycosylation site" description="N-linked (GlcNAc...) asparagine; by host" evidence="2">
    <location>
        <position position="27"/>
    </location>
</feature>
<feature type="glycosylation site" description="N-linked (GlcNAc...) asparagine; by host" evidence="2">
    <location>
        <position position="28"/>
    </location>
</feature>
<feature type="glycosylation site" description="N-linked (GlcNAc...) asparagine; by host" evidence="2">
    <location>
        <position position="40"/>
    </location>
</feature>
<feature type="glycosylation site" description="N-linked (GlcNAc...) asparagine; by host" evidence="2">
    <location>
        <position position="104"/>
    </location>
</feature>
<feature type="glycosylation site" description="N-linked (GlcNAc...) asparagine; by host" evidence="2">
    <location>
        <position position="304"/>
    </location>
</feature>
<feature type="glycosylation site" description="N-linked (GlcNAc...) asparagine; by host" evidence="2">
    <location>
        <position position="498"/>
    </location>
</feature>
<feature type="disulfide bond" description="Interchain (between HA1 and HA2 chains)" evidence="2">
    <location>
        <begin position="21"/>
        <end position="481"/>
    </location>
</feature>
<feature type="disulfide bond" evidence="2">
    <location>
        <begin position="59"/>
        <end position="292"/>
    </location>
</feature>
<feature type="disulfide bond" evidence="2">
    <location>
        <begin position="72"/>
        <end position="84"/>
    </location>
</feature>
<feature type="disulfide bond" evidence="2">
    <location>
        <begin position="107"/>
        <end position="153"/>
    </location>
</feature>
<feature type="disulfide bond" evidence="2">
    <location>
        <begin position="296"/>
        <end position="320"/>
    </location>
</feature>
<feature type="disulfide bond" evidence="2">
    <location>
        <begin position="488"/>
        <end position="492"/>
    </location>
</feature>
<reference key="1">
    <citation type="journal article" date="1998" name="J. Virol.">
        <title>Molecular basis for the generation in pigs of influenza A viruses with pandemic potential.</title>
        <authorList>
            <person name="Ito T."/>
            <person name="Couceiro J.N."/>
            <person name="Kelm S."/>
            <person name="Baum L.G."/>
            <person name="Krauss S."/>
            <person name="Castrucci M.R."/>
            <person name="Donatelli I."/>
            <person name="Kida H."/>
            <person name="Paulson J.C."/>
            <person name="Webster R.G."/>
            <person name="Kawaoka Y."/>
        </authorList>
    </citation>
    <scope>NUCLEOTIDE SEQUENCE [MRNA]</scope>
</reference>
<evidence type="ECO:0000250" key="1">
    <source>
        <dbReference type="UniProtKB" id="Q289M7"/>
    </source>
</evidence>
<evidence type="ECO:0000255" key="2">
    <source>
        <dbReference type="HAMAP-Rule" id="MF_04072"/>
    </source>
</evidence>
<evidence type="ECO:0000305" key="3"/>
<organismHost>
    <name type="scientific">Aves</name>
    <dbReference type="NCBI Taxonomy" id="8782"/>
</organismHost>
<organismHost>
    <name type="scientific">Homo sapiens</name>
    <name type="common">Human</name>
    <dbReference type="NCBI Taxonomy" id="9606"/>
</organismHost>
<organismHost>
    <name type="scientific">Sus scrofa</name>
    <name type="common">Pig</name>
    <dbReference type="NCBI Taxonomy" id="9823"/>
</organismHost>
<proteinExistence type="evidence at transcript level"/>